<organism>
    <name type="scientific">Lactobacillus delbrueckii subsp. bulgaricus (strain ATCC 11842 / DSM 20081 / BCRC 10696 / JCM 1002 / NBRC 13953 / NCIMB 11778 / NCTC 12712 / WDCM 00102 / Lb 14)</name>
    <dbReference type="NCBI Taxonomy" id="390333"/>
    <lineage>
        <taxon>Bacteria</taxon>
        <taxon>Bacillati</taxon>
        <taxon>Bacillota</taxon>
        <taxon>Bacilli</taxon>
        <taxon>Lactobacillales</taxon>
        <taxon>Lactobacillaceae</taxon>
        <taxon>Lactobacillus</taxon>
    </lineage>
</organism>
<gene>
    <name evidence="1" type="primary">purQ</name>
    <name type="ordered locus">Ldb1441</name>
</gene>
<comment type="function">
    <text evidence="1">Part of the phosphoribosylformylglycinamidine synthase complex involved in the purines biosynthetic pathway. Catalyzes the ATP-dependent conversion of formylglycinamide ribonucleotide (FGAR) and glutamine to yield formylglycinamidine ribonucleotide (FGAM) and glutamate. The FGAM synthase complex is composed of three subunits. PurQ produces an ammonia molecule by converting glutamine to glutamate. PurL transfers the ammonia molecule to FGAR to form FGAM in an ATP-dependent manner. PurS interacts with PurQ and PurL and is thought to assist in the transfer of the ammonia molecule from PurQ to PurL.</text>
</comment>
<comment type="catalytic activity">
    <reaction evidence="1">
        <text>N(2)-formyl-N(1)-(5-phospho-beta-D-ribosyl)glycinamide + L-glutamine + ATP + H2O = 2-formamido-N(1)-(5-O-phospho-beta-D-ribosyl)acetamidine + L-glutamate + ADP + phosphate + H(+)</text>
        <dbReference type="Rhea" id="RHEA:17129"/>
        <dbReference type="ChEBI" id="CHEBI:15377"/>
        <dbReference type="ChEBI" id="CHEBI:15378"/>
        <dbReference type="ChEBI" id="CHEBI:29985"/>
        <dbReference type="ChEBI" id="CHEBI:30616"/>
        <dbReference type="ChEBI" id="CHEBI:43474"/>
        <dbReference type="ChEBI" id="CHEBI:58359"/>
        <dbReference type="ChEBI" id="CHEBI:147286"/>
        <dbReference type="ChEBI" id="CHEBI:147287"/>
        <dbReference type="ChEBI" id="CHEBI:456216"/>
        <dbReference type="EC" id="6.3.5.3"/>
    </reaction>
</comment>
<comment type="catalytic activity">
    <reaction evidence="1">
        <text>L-glutamine + H2O = L-glutamate + NH4(+)</text>
        <dbReference type="Rhea" id="RHEA:15889"/>
        <dbReference type="ChEBI" id="CHEBI:15377"/>
        <dbReference type="ChEBI" id="CHEBI:28938"/>
        <dbReference type="ChEBI" id="CHEBI:29985"/>
        <dbReference type="ChEBI" id="CHEBI:58359"/>
        <dbReference type="EC" id="3.5.1.2"/>
    </reaction>
</comment>
<comment type="pathway">
    <text evidence="1">Purine metabolism; IMP biosynthesis via de novo pathway; 5-amino-1-(5-phospho-D-ribosyl)imidazole from N(2)-formyl-N(1)-(5-phospho-D-ribosyl)glycinamide: step 1/2.</text>
</comment>
<comment type="subunit">
    <text evidence="1">Part of the FGAM synthase complex composed of 1 PurL, 1 PurQ and 2 PurS subunits.</text>
</comment>
<comment type="subcellular location">
    <subcellularLocation>
        <location evidence="1">Cytoplasm</location>
    </subcellularLocation>
</comment>
<dbReference type="EC" id="6.3.5.3" evidence="1"/>
<dbReference type="EC" id="3.5.1.2" evidence="1"/>
<dbReference type="EMBL" id="CR954253">
    <property type="protein sequence ID" value="CAI98242.1"/>
    <property type="molecule type" value="Genomic_DNA"/>
</dbReference>
<dbReference type="RefSeq" id="WP_003618413.1">
    <property type="nucleotide sequence ID" value="NZ_JQAV01000009.1"/>
</dbReference>
<dbReference type="SMR" id="Q1G9F7"/>
<dbReference type="STRING" id="390333.Ldb1441"/>
<dbReference type="KEGG" id="ldb:Ldb1441"/>
<dbReference type="PATRIC" id="fig|390333.13.peg.1927"/>
<dbReference type="eggNOG" id="COG0047">
    <property type="taxonomic scope" value="Bacteria"/>
</dbReference>
<dbReference type="HOGENOM" id="CLU_001031_3_1_9"/>
<dbReference type="BioCyc" id="LDEL390333:LDB_RS06205-MONOMER"/>
<dbReference type="UniPathway" id="UPA00074">
    <property type="reaction ID" value="UER00128"/>
</dbReference>
<dbReference type="Proteomes" id="UP000001259">
    <property type="component" value="Chromosome"/>
</dbReference>
<dbReference type="GO" id="GO:0005737">
    <property type="term" value="C:cytoplasm"/>
    <property type="evidence" value="ECO:0007669"/>
    <property type="project" value="UniProtKB-SubCell"/>
</dbReference>
<dbReference type="GO" id="GO:0005524">
    <property type="term" value="F:ATP binding"/>
    <property type="evidence" value="ECO:0007669"/>
    <property type="project" value="UniProtKB-KW"/>
</dbReference>
<dbReference type="GO" id="GO:0004359">
    <property type="term" value="F:glutaminase activity"/>
    <property type="evidence" value="ECO:0007669"/>
    <property type="project" value="UniProtKB-EC"/>
</dbReference>
<dbReference type="GO" id="GO:0004642">
    <property type="term" value="F:phosphoribosylformylglycinamidine synthase activity"/>
    <property type="evidence" value="ECO:0007669"/>
    <property type="project" value="UniProtKB-UniRule"/>
</dbReference>
<dbReference type="GO" id="GO:0006189">
    <property type="term" value="P:'de novo' IMP biosynthetic process"/>
    <property type="evidence" value="ECO:0007669"/>
    <property type="project" value="UniProtKB-UniRule"/>
</dbReference>
<dbReference type="CDD" id="cd01740">
    <property type="entry name" value="GATase1_FGAR_AT"/>
    <property type="match status" value="1"/>
</dbReference>
<dbReference type="FunFam" id="3.40.50.880:FF:000019">
    <property type="entry name" value="Phosphoribosylformylglycinamidine synthase subunit PurQ"/>
    <property type="match status" value="1"/>
</dbReference>
<dbReference type="Gene3D" id="3.40.50.880">
    <property type="match status" value="1"/>
</dbReference>
<dbReference type="HAMAP" id="MF_00421">
    <property type="entry name" value="PurQ"/>
    <property type="match status" value="1"/>
</dbReference>
<dbReference type="InterPro" id="IPR029062">
    <property type="entry name" value="Class_I_gatase-like"/>
</dbReference>
<dbReference type="InterPro" id="IPR010075">
    <property type="entry name" value="PRibForGlyAmidine_synth_PurQ"/>
</dbReference>
<dbReference type="NCBIfam" id="TIGR01737">
    <property type="entry name" value="FGAM_synth_I"/>
    <property type="match status" value="1"/>
</dbReference>
<dbReference type="NCBIfam" id="NF002957">
    <property type="entry name" value="PRK03619.1"/>
    <property type="match status" value="1"/>
</dbReference>
<dbReference type="PANTHER" id="PTHR47552">
    <property type="entry name" value="PHOSPHORIBOSYLFORMYLGLYCINAMIDINE SYNTHASE SUBUNIT PURQ"/>
    <property type="match status" value="1"/>
</dbReference>
<dbReference type="PANTHER" id="PTHR47552:SF1">
    <property type="entry name" value="PHOSPHORIBOSYLFORMYLGLYCINAMIDINE SYNTHASE SUBUNIT PURQ"/>
    <property type="match status" value="1"/>
</dbReference>
<dbReference type="Pfam" id="PF13507">
    <property type="entry name" value="GATase_5"/>
    <property type="match status" value="1"/>
</dbReference>
<dbReference type="PIRSF" id="PIRSF001586">
    <property type="entry name" value="FGAM_synth_I"/>
    <property type="match status" value="1"/>
</dbReference>
<dbReference type="SMART" id="SM01211">
    <property type="entry name" value="GATase_5"/>
    <property type="match status" value="1"/>
</dbReference>
<dbReference type="SUPFAM" id="SSF52317">
    <property type="entry name" value="Class I glutamine amidotransferase-like"/>
    <property type="match status" value="1"/>
</dbReference>
<dbReference type="PROSITE" id="PS51273">
    <property type="entry name" value="GATASE_TYPE_1"/>
    <property type="match status" value="1"/>
</dbReference>
<sequence length="224" mass="24239">MKFAVIQFPGSNCDIDLYEALHTVCGADVAYVPSKESSLDGFDAVMLPGGFSYGDYLRAGAIARFTNIMPAIVEMAKAGKPVFGTCNGFQILTEAGLLPGALKRNDSLKFVCKTVELEVANNDTIFTSEYQKGEKINLPIAHADGSFYADPETLQKIEDNGQVVFRYSKENPNGSLNNIAGITNERGNVLGMMPHPERAVEALLGNTDGLRLFKSILNHAEVKA</sequence>
<evidence type="ECO:0000255" key="1">
    <source>
        <dbReference type="HAMAP-Rule" id="MF_00421"/>
    </source>
</evidence>
<feature type="chain" id="PRO_0000252708" description="Phosphoribosylformylglycinamidine synthase subunit PurQ">
    <location>
        <begin position="1"/>
        <end position="224"/>
    </location>
</feature>
<feature type="domain" description="Glutamine amidotransferase type-1" evidence="1">
    <location>
        <begin position="2"/>
        <end position="224"/>
    </location>
</feature>
<feature type="active site" description="Nucleophile" evidence="1">
    <location>
        <position position="86"/>
    </location>
</feature>
<feature type="active site" evidence="1">
    <location>
        <position position="195"/>
    </location>
</feature>
<feature type="active site" evidence="1">
    <location>
        <position position="197"/>
    </location>
</feature>
<name>PURQ_LACDA</name>
<accession>Q1G9F7</accession>
<proteinExistence type="inferred from homology"/>
<reference key="1">
    <citation type="journal article" date="2006" name="Proc. Natl. Acad. Sci. U.S.A.">
        <title>The complete genome sequence of Lactobacillus bulgaricus reveals extensive and ongoing reductive evolution.</title>
        <authorList>
            <person name="van de Guchte M."/>
            <person name="Penaud S."/>
            <person name="Grimaldi C."/>
            <person name="Barbe V."/>
            <person name="Bryson K."/>
            <person name="Nicolas P."/>
            <person name="Robert C."/>
            <person name="Oztas S."/>
            <person name="Mangenot S."/>
            <person name="Couloux A."/>
            <person name="Loux V."/>
            <person name="Dervyn R."/>
            <person name="Bossy R."/>
            <person name="Bolotin A."/>
            <person name="Batto J.-M."/>
            <person name="Walunas T."/>
            <person name="Gibrat J.-F."/>
            <person name="Bessieres P."/>
            <person name="Weissenbach J."/>
            <person name="Ehrlich S.D."/>
            <person name="Maguin E."/>
        </authorList>
    </citation>
    <scope>NUCLEOTIDE SEQUENCE [LARGE SCALE GENOMIC DNA]</scope>
    <source>
        <strain>ATCC 11842 / DSM 20081 / BCRC 10696 / JCM 1002 / NBRC 13953 / NCIMB 11778 / NCTC 12712 / WDCM 00102 / Lb 14</strain>
    </source>
</reference>
<keyword id="KW-0067">ATP-binding</keyword>
<keyword id="KW-0963">Cytoplasm</keyword>
<keyword id="KW-0315">Glutamine amidotransferase</keyword>
<keyword id="KW-0378">Hydrolase</keyword>
<keyword id="KW-0436">Ligase</keyword>
<keyword id="KW-0547">Nucleotide-binding</keyword>
<keyword id="KW-0658">Purine biosynthesis</keyword>
<keyword id="KW-1185">Reference proteome</keyword>
<protein>
    <recommendedName>
        <fullName evidence="1">Phosphoribosylformylglycinamidine synthase subunit PurQ</fullName>
        <shortName evidence="1">FGAM synthase</shortName>
        <ecNumber evidence="1">6.3.5.3</ecNumber>
    </recommendedName>
    <alternativeName>
        <fullName evidence="1">Formylglycinamide ribonucleotide amidotransferase subunit I</fullName>
        <shortName evidence="1">FGAR amidotransferase I</shortName>
        <shortName evidence="1">FGAR-AT I</shortName>
    </alternativeName>
    <alternativeName>
        <fullName evidence="1">Glutaminase PurQ</fullName>
        <ecNumber evidence="1">3.5.1.2</ecNumber>
    </alternativeName>
    <alternativeName>
        <fullName evidence="1">Phosphoribosylformylglycinamidine synthase subunit I</fullName>
    </alternativeName>
</protein>